<gene>
    <name type="ordered locus">LBL_2937</name>
</gene>
<feature type="chain" id="PRO_1000013099" description="Putative membrane protein insertion efficiency factor">
    <location>
        <begin position="1"/>
        <end position="84"/>
    </location>
</feature>
<feature type="region of interest" description="Disordered" evidence="2">
    <location>
        <begin position="61"/>
        <end position="84"/>
    </location>
</feature>
<feature type="compositionally biased region" description="Polar residues" evidence="2">
    <location>
        <begin position="72"/>
        <end position="84"/>
    </location>
</feature>
<dbReference type="EMBL" id="CP000348">
    <property type="protein sequence ID" value="ABJ80254.1"/>
    <property type="molecule type" value="Genomic_DNA"/>
</dbReference>
<dbReference type="KEGG" id="lbl:LBL_2937"/>
<dbReference type="HOGENOM" id="CLU_144811_6_0_12"/>
<dbReference type="GO" id="GO:0005886">
    <property type="term" value="C:plasma membrane"/>
    <property type="evidence" value="ECO:0007669"/>
    <property type="project" value="UniProtKB-SubCell"/>
</dbReference>
<dbReference type="HAMAP" id="MF_00386">
    <property type="entry name" value="UPF0161_YidD"/>
    <property type="match status" value="1"/>
</dbReference>
<dbReference type="InterPro" id="IPR002696">
    <property type="entry name" value="Membr_insert_effic_factor_YidD"/>
</dbReference>
<dbReference type="NCBIfam" id="TIGR00278">
    <property type="entry name" value="membrane protein insertion efficiency factor YidD"/>
    <property type="match status" value="1"/>
</dbReference>
<dbReference type="PANTHER" id="PTHR33383">
    <property type="entry name" value="MEMBRANE PROTEIN INSERTION EFFICIENCY FACTOR-RELATED"/>
    <property type="match status" value="1"/>
</dbReference>
<dbReference type="PANTHER" id="PTHR33383:SF1">
    <property type="entry name" value="MEMBRANE PROTEIN INSERTION EFFICIENCY FACTOR-RELATED"/>
    <property type="match status" value="1"/>
</dbReference>
<dbReference type="Pfam" id="PF01809">
    <property type="entry name" value="YidD"/>
    <property type="match status" value="1"/>
</dbReference>
<dbReference type="SMART" id="SM01234">
    <property type="entry name" value="Haemolytic"/>
    <property type="match status" value="1"/>
</dbReference>
<accession>Q04XE1</accession>
<comment type="function">
    <text evidence="1">Could be involved in insertion of integral membrane proteins into the membrane.</text>
</comment>
<comment type="subcellular location">
    <subcellularLocation>
        <location evidence="1">Cell inner membrane</location>
        <topology evidence="1">Peripheral membrane protein</topology>
        <orientation evidence="1">Cytoplasmic side</orientation>
    </subcellularLocation>
</comment>
<comment type="similarity">
    <text evidence="1">Belongs to the UPF0161 family.</text>
</comment>
<name>YIDD_LEPBL</name>
<keyword id="KW-0997">Cell inner membrane</keyword>
<keyword id="KW-1003">Cell membrane</keyword>
<keyword id="KW-0472">Membrane</keyword>
<reference key="1">
    <citation type="journal article" date="2006" name="Proc. Natl. Acad. Sci. U.S.A.">
        <title>Genome reduction in Leptospira borgpetersenii reflects limited transmission potential.</title>
        <authorList>
            <person name="Bulach D.M."/>
            <person name="Zuerner R.L."/>
            <person name="Wilson P."/>
            <person name="Seemann T."/>
            <person name="McGrath A."/>
            <person name="Cullen P.A."/>
            <person name="Davis J."/>
            <person name="Johnson M."/>
            <person name="Kuczek E."/>
            <person name="Alt D.P."/>
            <person name="Peterson-Burch B."/>
            <person name="Coppel R.L."/>
            <person name="Rood J.I."/>
            <person name="Davies J.K."/>
            <person name="Adler B."/>
        </authorList>
    </citation>
    <scope>NUCLEOTIDE SEQUENCE [LARGE SCALE GENOMIC DNA]</scope>
    <source>
        <strain>L550</strain>
    </source>
</reference>
<protein>
    <recommendedName>
        <fullName evidence="1">Putative membrane protein insertion efficiency factor</fullName>
    </recommendedName>
</protein>
<sequence length="84" mass="9692">MNQLVIQLIQLYKKIISPLLPPACRFTPTCSEYTIQAFRECGFFQAIQLSAWRILRCNPLSQGFEDPLPPNTKRTNLTHGRQTK</sequence>
<proteinExistence type="inferred from homology"/>
<evidence type="ECO:0000255" key="1">
    <source>
        <dbReference type="HAMAP-Rule" id="MF_00386"/>
    </source>
</evidence>
<evidence type="ECO:0000256" key="2">
    <source>
        <dbReference type="SAM" id="MobiDB-lite"/>
    </source>
</evidence>
<organism>
    <name type="scientific">Leptospira borgpetersenii serovar Hardjo-bovis (strain L550)</name>
    <dbReference type="NCBI Taxonomy" id="355276"/>
    <lineage>
        <taxon>Bacteria</taxon>
        <taxon>Pseudomonadati</taxon>
        <taxon>Spirochaetota</taxon>
        <taxon>Spirochaetia</taxon>
        <taxon>Leptospirales</taxon>
        <taxon>Leptospiraceae</taxon>
        <taxon>Leptospira</taxon>
    </lineage>
</organism>